<accession>P21840</accession>
<sequence length="517" mass="54191">MIGKAFIILSLLNELPTPTAAQAAQGGALGKDVWLPLAKFTATAAKIPGRAAKLLQDRSAQIVNLMKLQVQADICLNKAASEVSALGWQALAVAIAADIGSLQSLQQQRSEEAIAAAAAAEFARGHAAEFFKVAAAVQSAANSGCLTTNNKGGAAGSVINGFSTLGTAEQPAIGATSTAHVGDDITAITTTGFSDLAATDGIRTDSLTADTNCVLFKGGSDGPLTTANFGQSIPFAGGYLTRNPTANTASSADGTDFVSNPEDSKIAGIKVYRDAHAAAAKIRTAATFGSTFTDFKKLDQAKKSVHLRAAVKNIILGKPDGSVDDLSGEIDTKINQVFGEDQETFHSRFWDQLTKVKVEKAASGQEETTLDAITSFAALSRARTYYSTKVIKGLRDKISSLEIKNSKTEVKVTDADCNKHQSKDKCAAPCKWNENTTDINKKCSLDPVKATEQQAAQTAGAGEGAAGTTTDKCKDKKKDDCKSPDCKWEGETCKDSSILLNKQFALMVSAAFVALLF</sequence>
<comment type="function">
    <text>VSG forms a coat on the surface of the parasite. The trypanosome evades the immune response of the host by expressing a series of antigenically distinct VSGs from an estimated 1000 VSG genes.</text>
</comment>
<comment type="subcellular location">
    <subcellularLocation>
        <location>Cell membrane</location>
        <topology>Lipid-anchor</topology>
        <topology>GPI-anchor</topology>
    </subcellularLocation>
    <text evidence="1">A soluble form is released from ruptured cells by the action of a PI-PLC.</text>
</comment>
<proteinExistence type="evidence at transcript level"/>
<keyword id="KW-1003">Cell membrane</keyword>
<keyword id="KW-1015">Disulfide bond</keyword>
<keyword id="KW-0325">Glycoprotein</keyword>
<keyword id="KW-0336">GPI-anchor</keyword>
<keyword id="KW-0449">Lipoprotein</keyword>
<keyword id="KW-0472">Membrane</keyword>
<keyword id="KW-0732">Signal</keyword>
<keyword id="KW-0821">Trypanosomiasis</keyword>
<protein>
    <recommendedName>
        <fullName>Variant surface glycoprotein MVAT5</fullName>
        <shortName>VSG</shortName>
    </recommendedName>
</protein>
<feature type="signal peptide" evidence="2">
    <location>
        <begin position="1"/>
        <end position="21"/>
    </location>
</feature>
<feature type="chain" id="PRO_0000036451" description="Variant surface glycoprotein MVAT5">
    <location>
        <begin position="22"/>
        <end position="495"/>
    </location>
</feature>
<feature type="propeptide" id="PRO_0000036452" description="Removed in mature form" evidence="2">
    <location>
        <begin position="496"/>
        <end position="517"/>
    </location>
</feature>
<feature type="region of interest" description="Disordered" evidence="3">
    <location>
        <begin position="454"/>
        <end position="487"/>
    </location>
</feature>
<feature type="compositionally biased region" description="Low complexity" evidence="3">
    <location>
        <begin position="454"/>
        <end position="470"/>
    </location>
</feature>
<feature type="compositionally biased region" description="Basic and acidic residues" evidence="3">
    <location>
        <begin position="471"/>
        <end position="487"/>
    </location>
</feature>
<feature type="lipid moiety-binding region" description="GPI-anchor amidated aspartate" evidence="2">
    <location>
        <position position="495"/>
    </location>
</feature>
<feature type="glycosylation site" description="N-linked (GlcNAc...) asparagine" evidence="2">
    <location>
        <position position="435"/>
    </location>
</feature>
<feature type="disulfide bond" evidence="1">
    <location>
        <begin position="417"/>
        <end position="430"/>
    </location>
</feature>
<feature type="disulfide bond" evidence="1">
    <location>
        <begin position="426"/>
        <end position="443"/>
    </location>
</feature>
<reference key="1">
    <citation type="journal article" date="1990" name="Biochem. Biophys. Res. Commun.">
        <title>Sequences of three VSG mRNAs expressed in a mixed population of Trypanosoma brucei rhodesiense.</title>
        <authorList>
            <person name="Reddy L.V."/>
            <person name="Hall T."/>
            <person name="Donelson J.E."/>
        </authorList>
    </citation>
    <scope>NUCLEOTIDE SEQUENCE [MRNA]</scope>
    <source>
        <strain>WRATat 1</strain>
    </source>
</reference>
<evidence type="ECO:0000250" key="1"/>
<evidence type="ECO:0000255" key="2"/>
<evidence type="ECO:0000256" key="3">
    <source>
        <dbReference type="SAM" id="MobiDB-lite"/>
    </source>
</evidence>
<organism>
    <name type="scientific">Trypanosoma brucei rhodesiense</name>
    <dbReference type="NCBI Taxonomy" id="31286"/>
    <lineage>
        <taxon>Eukaryota</taxon>
        <taxon>Discoba</taxon>
        <taxon>Euglenozoa</taxon>
        <taxon>Kinetoplastea</taxon>
        <taxon>Metakinetoplastina</taxon>
        <taxon>Trypanosomatida</taxon>
        <taxon>Trypanosomatidae</taxon>
        <taxon>Trypanosoma</taxon>
    </lineage>
</organism>
<dbReference type="EMBL" id="M33825">
    <property type="protein sequence ID" value="AAA30216.1"/>
    <property type="molecule type" value="mRNA"/>
</dbReference>
<dbReference type="PIR" id="C35480">
    <property type="entry name" value="C35480"/>
</dbReference>
<dbReference type="SMR" id="P21840"/>
<dbReference type="GO" id="GO:0005886">
    <property type="term" value="C:plasma membrane"/>
    <property type="evidence" value="ECO:0007669"/>
    <property type="project" value="UniProtKB-SubCell"/>
</dbReference>
<dbReference type="GO" id="GO:0098552">
    <property type="term" value="C:side of membrane"/>
    <property type="evidence" value="ECO:0007669"/>
    <property type="project" value="UniProtKB-KW"/>
</dbReference>
<dbReference type="GO" id="GO:0042783">
    <property type="term" value="P:symbiont-mediated evasion of host immune response"/>
    <property type="evidence" value="ECO:0007669"/>
    <property type="project" value="InterPro"/>
</dbReference>
<dbReference type="Gene3D" id="3.30.1680.40">
    <property type="match status" value="1"/>
</dbReference>
<dbReference type="Gene3D" id="3.90.150.10">
    <property type="entry name" value="Variant Surface Glycoprotein, subunit A domain 1"/>
    <property type="match status" value="1"/>
</dbReference>
<dbReference type="Gene3D" id="1.10.470.10">
    <property type="entry name" value="Variant Surface Glycoprotein, subunit A, domain 2"/>
    <property type="match status" value="1"/>
</dbReference>
<dbReference type="InterPro" id="IPR001812">
    <property type="entry name" value="Trypano_VSG_A_N_dom"/>
</dbReference>
<dbReference type="InterPro" id="IPR019609">
    <property type="entry name" value="Variant_surf_glycoprt_trypan_C"/>
</dbReference>
<dbReference type="InterPro" id="IPR027446">
    <property type="entry name" value="VSG_C_dom_sf"/>
</dbReference>
<dbReference type="Pfam" id="PF00913">
    <property type="entry name" value="Trypan_glycop"/>
    <property type="match status" value="1"/>
</dbReference>
<dbReference type="Pfam" id="PF10659">
    <property type="entry name" value="Trypan_glycop_C"/>
    <property type="match status" value="1"/>
</dbReference>
<dbReference type="SUPFAM" id="SSF58087">
    <property type="entry name" value="Variant surface glycoprotein (N-terminal domain)"/>
    <property type="match status" value="1"/>
</dbReference>
<dbReference type="SUPFAM" id="SSF118251">
    <property type="entry name" value="Variant surface glycoprotein MITAT 1.2, VSG 221, C-terminal domain"/>
    <property type="match status" value="1"/>
</dbReference>
<name>VSM5_TRYBR</name>